<name>RMLB_MYCTO</name>
<proteinExistence type="inferred from homology"/>
<accession>P9WN64</accession>
<accession>L0TFH5</accession>
<accession>O06329</accession>
<accession>Q7D5I4</accession>
<reference key="1">
    <citation type="journal article" date="2002" name="J. Bacteriol.">
        <title>Whole-genome comparison of Mycobacterium tuberculosis clinical and laboratory strains.</title>
        <authorList>
            <person name="Fleischmann R.D."/>
            <person name="Alland D."/>
            <person name="Eisen J.A."/>
            <person name="Carpenter L."/>
            <person name="White O."/>
            <person name="Peterson J.D."/>
            <person name="DeBoy R.T."/>
            <person name="Dodson R.J."/>
            <person name="Gwinn M.L."/>
            <person name="Haft D.H."/>
            <person name="Hickey E.K."/>
            <person name="Kolonay J.F."/>
            <person name="Nelson W.C."/>
            <person name="Umayam L.A."/>
            <person name="Ermolaeva M.D."/>
            <person name="Salzberg S.L."/>
            <person name="Delcher A."/>
            <person name="Utterback T.R."/>
            <person name="Weidman J.F."/>
            <person name="Khouri H.M."/>
            <person name="Gill J."/>
            <person name="Mikula A."/>
            <person name="Bishai W."/>
            <person name="Jacobs W.R. Jr."/>
            <person name="Venter J.C."/>
            <person name="Fraser C.M."/>
        </authorList>
    </citation>
    <scope>NUCLEOTIDE SEQUENCE [LARGE SCALE GENOMIC DNA]</scope>
    <source>
        <strain>CDC 1551 / Oshkosh</strain>
    </source>
</reference>
<keyword id="KW-0456">Lyase</keyword>
<keyword id="KW-0520">NAD</keyword>
<keyword id="KW-1185">Reference proteome</keyword>
<feature type="chain" id="PRO_0000427181" description="dTDP-glucose 4,6-dehydratase">
    <location>
        <begin position="1"/>
        <end position="331"/>
    </location>
</feature>
<feature type="active site" description="Proton donor" evidence="2">
    <location>
        <position position="121"/>
    </location>
</feature>
<feature type="active site" description="Proton acceptor" evidence="2">
    <location>
        <position position="122"/>
    </location>
</feature>
<feature type="active site" description="Proton acceptor" evidence="2">
    <location>
        <position position="147"/>
    </location>
</feature>
<feature type="binding site" evidence="2">
    <location>
        <begin position="11"/>
        <end position="12"/>
    </location>
    <ligand>
        <name>NAD(+)</name>
        <dbReference type="ChEBI" id="CHEBI:57540"/>
    </ligand>
</feature>
<feature type="binding site" evidence="2">
    <location>
        <begin position="33"/>
        <end position="36"/>
    </location>
    <ligand>
        <name>NAD(+)</name>
        <dbReference type="ChEBI" id="CHEBI:57540"/>
    </ligand>
</feature>
<feature type="binding site" evidence="2">
    <location>
        <begin position="57"/>
        <end position="58"/>
    </location>
    <ligand>
        <name>NAD(+)</name>
        <dbReference type="ChEBI" id="CHEBI:57540"/>
    </ligand>
</feature>
<feature type="binding site" evidence="2">
    <location>
        <begin position="77"/>
        <end position="81"/>
    </location>
    <ligand>
        <name>NAD(+)</name>
        <dbReference type="ChEBI" id="CHEBI:57540"/>
    </ligand>
</feature>
<feature type="binding site" evidence="1">
    <location>
        <position position="81"/>
    </location>
    <ligand>
        <name>substrate</name>
    </ligand>
</feature>
<feature type="binding site" evidence="2">
    <location>
        <position position="96"/>
    </location>
    <ligand>
        <name>NAD(+)</name>
        <dbReference type="ChEBI" id="CHEBI:57540"/>
    </ligand>
</feature>
<feature type="binding site" evidence="1">
    <location>
        <position position="120"/>
    </location>
    <ligand>
        <name>substrate</name>
    </ligand>
</feature>
<feature type="binding site" evidence="2">
    <location>
        <begin position="147"/>
        <end position="151"/>
    </location>
    <ligand>
        <name>NAD(+)</name>
        <dbReference type="ChEBI" id="CHEBI:57540"/>
    </ligand>
</feature>
<feature type="binding site" evidence="1">
    <location>
        <position position="176"/>
    </location>
    <ligand>
        <name>substrate</name>
    </ligand>
</feature>
<feature type="binding site" evidence="2">
    <location>
        <position position="177"/>
    </location>
    <ligand>
        <name>NAD(+)</name>
        <dbReference type="ChEBI" id="CHEBI:57540"/>
    </ligand>
</feature>
<feature type="binding site" evidence="3">
    <location>
        <begin position="186"/>
        <end position="191"/>
    </location>
    <ligand>
        <name>substrate</name>
    </ligand>
</feature>
<feature type="binding site" evidence="3">
    <location>
        <begin position="202"/>
        <end position="204"/>
    </location>
    <ligand>
        <name>substrate</name>
    </ligand>
</feature>
<feature type="binding site" evidence="1">
    <location>
        <position position="211"/>
    </location>
    <ligand>
        <name>substrate</name>
    </ligand>
</feature>
<feature type="binding site" evidence="1">
    <location>
        <position position="246"/>
    </location>
    <ligand>
        <name>substrate</name>
    </ligand>
</feature>
<feature type="binding site" evidence="1">
    <location>
        <begin position="269"/>
        <end position="273"/>
    </location>
    <ligand>
        <name>substrate</name>
    </ligand>
</feature>
<evidence type="ECO:0000250" key="1">
    <source>
        <dbReference type="UniProtKB" id="P26391"/>
    </source>
</evidence>
<evidence type="ECO:0000250" key="2">
    <source>
        <dbReference type="UniProtKB" id="P27830"/>
    </source>
</evidence>
<evidence type="ECO:0000250" key="3">
    <source>
        <dbReference type="UniProtKB" id="P95780"/>
    </source>
</evidence>
<evidence type="ECO:0000250" key="4">
    <source>
        <dbReference type="UniProtKB" id="P9WN65"/>
    </source>
</evidence>
<evidence type="ECO:0000305" key="5"/>
<protein>
    <recommendedName>
        <fullName evidence="2">dTDP-glucose 4,6-dehydratase</fullName>
        <ecNumber evidence="2">4.2.1.46</ecNumber>
    </recommendedName>
</protein>
<sequence>MRLLVTGGAGFIGTNFVHSAVREHPDDAVTVLDALTYAGRRESLADVEDAIRLVQGDITDAELVSQLVAESDAVVHFAAESHVDNALDNPEPFLHTNVIGTFTILEAVRRHGVRLHHISTDEVYGDLELDDRARFTESTPYNPSSPYSATKAGADMLVRAWVRSYGVRATISNCSNNYGPYQHVEKFIPRQITNVLTGRRPKLYGAGANVRDWIHVDDHNSAVRRILDRGRIGRTYLISSEGERDNLTVLRTLLRLMDRDPDDFDHVTDRVGHDLRYAIDPSTLYDELCWAPKHTDFEEGLRTTIDWYRDNESWWRPLKDATEARYQERGQ</sequence>
<gene>
    <name type="primary">rmlB</name>
    <name type="synonym">rfbB</name>
    <name type="ordered locus">MT3570</name>
</gene>
<dbReference type="EC" id="4.2.1.46" evidence="2"/>
<dbReference type="EMBL" id="AE000516">
    <property type="protein sequence ID" value="AAK47910.1"/>
    <property type="molecule type" value="Genomic_DNA"/>
</dbReference>
<dbReference type="PIR" id="E70566">
    <property type="entry name" value="E70566"/>
</dbReference>
<dbReference type="RefSeq" id="WP_003418607.1">
    <property type="nucleotide sequence ID" value="NZ_KK341227.1"/>
</dbReference>
<dbReference type="SMR" id="P9WN64"/>
<dbReference type="KEGG" id="mtc:MT3570"/>
<dbReference type="PATRIC" id="fig|83331.31.peg.3827"/>
<dbReference type="HOGENOM" id="CLU_007383_1_14_11"/>
<dbReference type="UniPathway" id="UPA00124"/>
<dbReference type="Proteomes" id="UP000001020">
    <property type="component" value="Chromosome"/>
</dbReference>
<dbReference type="GO" id="GO:0008460">
    <property type="term" value="F:dTDP-glucose 4,6-dehydratase activity"/>
    <property type="evidence" value="ECO:0007669"/>
    <property type="project" value="UniProtKB-EC"/>
</dbReference>
<dbReference type="GO" id="GO:0019305">
    <property type="term" value="P:dTDP-rhamnose biosynthetic process"/>
    <property type="evidence" value="ECO:0007669"/>
    <property type="project" value="UniProtKB-UniPathway"/>
</dbReference>
<dbReference type="CDD" id="cd05246">
    <property type="entry name" value="dTDP_GD_SDR_e"/>
    <property type="match status" value="1"/>
</dbReference>
<dbReference type="Gene3D" id="3.40.50.720">
    <property type="entry name" value="NAD(P)-binding Rossmann-like Domain"/>
    <property type="match status" value="1"/>
</dbReference>
<dbReference type="Gene3D" id="3.90.25.10">
    <property type="entry name" value="UDP-galactose 4-epimerase, domain 1"/>
    <property type="match status" value="1"/>
</dbReference>
<dbReference type="InterPro" id="IPR005888">
    <property type="entry name" value="dTDP_Gluc_deHydtase"/>
</dbReference>
<dbReference type="InterPro" id="IPR016040">
    <property type="entry name" value="NAD(P)-bd_dom"/>
</dbReference>
<dbReference type="InterPro" id="IPR036291">
    <property type="entry name" value="NAD(P)-bd_dom_sf"/>
</dbReference>
<dbReference type="NCBIfam" id="TIGR01181">
    <property type="entry name" value="dTDP_gluc_dehyt"/>
    <property type="match status" value="1"/>
</dbReference>
<dbReference type="PANTHER" id="PTHR43000">
    <property type="entry name" value="DTDP-D-GLUCOSE 4,6-DEHYDRATASE-RELATED"/>
    <property type="match status" value="1"/>
</dbReference>
<dbReference type="Pfam" id="PF16363">
    <property type="entry name" value="GDP_Man_Dehyd"/>
    <property type="match status" value="1"/>
</dbReference>
<dbReference type="SUPFAM" id="SSF51735">
    <property type="entry name" value="NAD(P)-binding Rossmann-fold domains"/>
    <property type="match status" value="1"/>
</dbReference>
<organism>
    <name type="scientific">Mycobacterium tuberculosis (strain CDC 1551 / Oshkosh)</name>
    <dbReference type="NCBI Taxonomy" id="83331"/>
    <lineage>
        <taxon>Bacteria</taxon>
        <taxon>Bacillati</taxon>
        <taxon>Actinomycetota</taxon>
        <taxon>Actinomycetes</taxon>
        <taxon>Mycobacteriales</taxon>
        <taxon>Mycobacteriaceae</taxon>
        <taxon>Mycobacterium</taxon>
        <taxon>Mycobacterium tuberculosis complex</taxon>
    </lineage>
</organism>
<comment type="function">
    <text evidence="2 4">Catalyzes the dehydration of dTDP-D-glucose to form dTDP-6-deoxy-D-xylo-4-hexulose via a three-step process involving oxidation, dehydration and reduction. Involved in the biosynthesis of the dTDP-L-rhamnose which is a component of the critical linker, D-N-acetylglucosamine-L-rhamnose disaccharide, which connects the galactan region of arabinogalactan to peptidoglycan via a phosphodiester linkage.</text>
</comment>
<comment type="catalytic activity">
    <reaction evidence="2">
        <text>dTDP-alpha-D-glucose = dTDP-4-dehydro-6-deoxy-alpha-D-glucose + H2O</text>
        <dbReference type="Rhea" id="RHEA:17221"/>
        <dbReference type="ChEBI" id="CHEBI:15377"/>
        <dbReference type="ChEBI" id="CHEBI:57477"/>
        <dbReference type="ChEBI" id="CHEBI:57649"/>
        <dbReference type="EC" id="4.2.1.46"/>
    </reaction>
</comment>
<comment type="cofactor">
    <cofactor evidence="2">
        <name>NAD(+)</name>
        <dbReference type="ChEBI" id="CHEBI:57540"/>
    </cofactor>
    <text evidence="2">Binds 1 NAD(+) per subunit.</text>
</comment>
<comment type="pathway">
    <text evidence="4">Carbohydrate biosynthesis; dTDP-L-rhamnose biosynthesis.</text>
</comment>
<comment type="subunit">
    <text evidence="2">Homodimer.</text>
</comment>
<comment type="similarity">
    <text evidence="5">Belongs to the NAD(P)-dependent epimerase/dehydratase family. dTDP-glucose dehydratase subfamily.</text>
</comment>